<reference key="1">
    <citation type="journal article" date="1996" name="Genetics">
        <title>Physical map of the malaria vector Anopheles gambiae.</title>
        <authorList>
            <person name="della Torre A."/>
            <person name="Favia G."/>
            <person name="Mariotti G."/>
            <person name="Coluzzi M."/>
            <person name="Mathiopoulos K.D."/>
        </authorList>
    </citation>
    <scope>NUCLEOTIDE SEQUENCE [MRNA]</scope>
    <source>
        <strain>Gasua</strain>
    </source>
</reference>
<reference key="2">
    <citation type="journal article" date="2002" name="Science">
        <title>The genome sequence of the malaria mosquito Anopheles gambiae.</title>
        <authorList>
            <person name="Holt R.A."/>
            <person name="Subramanian G.M."/>
            <person name="Halpern A."/>
            <person name="Sutton G.G."/>
            <person name="Charlab R."/>
            <person name="Nusskern D.R."/>
            <person name="Wincker P."/>
            <person name="Clark A.G."/>
            <person name="Ribeiro J.M.C."/>
            <person name="Wides R."/>
            <person name="Salzberg S.L."/>
            <person name="Loftus B.J."/>
            <person name="Yandell M.D."/>
            <person name="Majoros W.H."/>
            <person name="Rusch D.B."/>
            <person name="Lai Z."/>
            <person name="Kraft C.L."/>
            <person name="Abril J.F."/>
            <person name="Anthouard V."/>
            <person name="Arensburger P."/>
            <person name="Atkinson P.W."/>
            <person name="Baden H."/>
            <person name="de Berardinis V."/>
            <person name="Baldwin D."/>
            <person name="Benes V."/>
            <person name="Biedler J."/>
            <person name="Blass C."/>
            <person name="Bolanos R."/>
            <person name="Boscus D."/>
            <person name="Barnstead M."/>
            <person name="Cai S."/>
            <person name="Center A."/>
            <person name="Chaturverdi K."/>
            <person name="Christophides G.K."/>
            <person name="Chrystal M.A.M."/>
            <person name="Clamp M."/>
            <person name="Cravchik A."/>
            <person name="Curwen V."/>
            <person name="Dana A."/>
            <person name="Delcher A."/>
            <person name="Dew I."/>
            <person name="Evans C.A."/>
            <person name="Flanigan M."/>
            <person name="Grundschober-Freimoser A."/>
            <person name="Friedli L."/>
            <person name="Gu Z."/>
            <person name="Guan P."/>
            <person name="Guigo R."/>
            <person name="Hillenmeyer M.E."/>
            <person name="Hladun S.L."/>
            <person name="Hogan J.R."/>
            <person name="Hong Y.S."/>
            <person name="Hoover J."/>
            <person name="Jaillon O."/>
            <person name="Ke Z."/>
            <person name="Kodira C.D."/>
            <person name="Kokoza E."/>
            <person name="Koutsos A."/>
            <person name="Letunic I."/>
            <person name="Levitsky A.A."/>
            <person name="Liang Y."/>
            <person name="Lin J.-J."/>
            <person name="Lobo N.F."/>
            <person name="Lopez J.R."/>
            <person name="Malek J.A."/>
            <person name="McIntosh T.C."/>
            <person name="Meister S."/>
            <person name="Miller J.R."/>
            <person name="Mobarry C."/>
            <person name="Mongin E."/>
            <person name="Murphy S.D."/>
            <person name="O'Brochta D.A."/>
            <person name="Pfannkoch C."/>
            <person name="Qi R."/>
            <person name="Regier M.A."/>
            <person name="Remington K."/>
            <person name="Shao H."/>
            <person name="Sharakhova M.V."/>
            <person name="Sitter C.D."/>
            <person name="Shetty J."/>
            <person name="Smith T.J."/>
            <person name="Strong R."/>
            <person name="Sun J."/>
            <person name="Thomasova D."/>
            <person name="Ton L.Q."/>
            <person name="Topalis P."/>
            <person name="Tu Z.J."/>
            <person name="Unger M.F."/>
            <person name="Walenz B."/>
            <person name="Wang A.H."/>
            <person name="Wang J."/>
            <person name="Wang M."/>
            <person name="Wang X."/>
            <person name="Woodford K.J."/>
            <person name="Wortman J.R."/>
            <person name="Wu M."/>
            <person name="Yao A."/>
            <person name="Zdobnov E.M."/>
            <person name="Zhang H."/>
            <person name="Zhao Q."/>
            <person name="Zhao S."/>
            <person name="Zhu S.C."/>
            <person name="Zhimulev I."/>
            <person name="Coluzzi M."/>
            <person name="della Torre A."/>
            <person name="Roth C.W."/>
            <person name="Louis C."/>
            <person name="Kalush F."/>
            <person name="Mural R.J."/>
            <person name="Myers E.W."/>
            <person name="Adams M.D."/>
            <person name="Smith H.O."/>
            <person name="Broder S."/>
            <person name="Gardner M.J."/>
            <person name="Fraser C.M."/>
            <person name="Birney E."/>
            <person name="Bork P."/>
            <person name="Brey P.T."/>
            <person name="Venter J.C."/>
            <person name="Weissenbach J."/>
            <person name="Kafatos F.C."/>
            <person name="Collins F.H."/>
            <person name="Hoffman S.L."/>
        </authorList>
    </citation>
    <scope>NUCLEOTIDE SEQUENCE [LARGE SCALE GENOMIC DNA]</scope>
    <source>
        <strain>PEST</strain>
    </source>
</reference>
<protein>
    <recommendedName>
        <fullName evidence="2">Small ribosomal subunit protein uS15</fullName>
    </recommendedName>
    <alternativeName>
        <fullName>40S ribosomal protein S13</fullName>
    </alternativeName>
</protein>
<organism>
    <name type="scientific">Anopheles gambiae</name>
    <name type="common">African malaria mosquito</name>
    <dbReference type="NCBI Taxonomy" id="7165"/>
    <lineage>
        <taxon>Eukaryota</taxon>
        <taxon>Metazoa</taxon>
        <taxon>Ecdysozoa</taxon>
        <taxon>Arthropoda</taxon>
        <taxon>Hexapoda</taxon>
        <taxon>Insecta</taxon>
        <taxon>Pterygota</taxon>
        <taxon>Neoptera</taxon>
        <taxon>Endopterygota</taxon>
        <taxon>Diptera</taxon>
        <taxon>Nematocera</taxon>
        <taxon>Culicoidea</taxon>
        <taxon>Culicidae</taxon>
        <taxon>Anophelinae</taxon>
        <taxon>Anopheles</taxon>
    </lineage>
</organism>
<sequence>MGRMHAPGKGISKSALPYRRSVPSWLKLSAEDVKEQIKKLGKKGMTPSQIGIILRDSHGVAQVRFVNGNKVLRIMKAVGLKPDIPEDLYFLIKKAVSIRKHLERNRKDIDSKFRLILIESRIHRLARYYKIKAVLPPNWKYESSTASALVA</sequence>
<name>RS13_ANOGA</name>
<comment type="similarity">
    <text evidence="2">Belongs to the universal ribosomal protein uS15 family.</text>
</comment>
<accession>P52811</accession>
<accession>Q7PNS7</accession>
<keyword id="KW-1185">Reference proteome</keyword>
<keyword id="KW-0687">Ribonucleoprotein</keyword>
<keyword id="KW-0689">Ribosomal protein</keyword>
<proteinExistence type="evidence at transcript level"/>
<gene>
    <name type="primary">RpS13</name>
    <name type="ORF">AGAP005947</name>
</gene>
<dbReference type="EMBL" id="U50479">
    <property type="protein sequence ID" value="AAA93478.1"/>
    <property type="molecule type" value="mRNA"/>
</dbReference>
<dbReference type="EMBL" id="AAAB01008960">
    <property type="protein sequence ID" value="EAA11694.3"/>
    <property type="molecule type" value="Genomic_DNA"/>
</dbReference>
<dbReference type="SMR" id="P52811"/>
<dbReference type="FunCoup" id="P52811">
    <property type="interactions" value="1520"/>
</dbReference>
<dbReference type="STRING" id="7165.P52811"/>
<dbReference type="PaxDb" id="7165-AGAP005947-PA"/>
<dbReference type="EnsemblMetazoa" id="AGAP005947-RA">
    <property type="protein sequence ID" value="AGAP005947-PA"/>
    <property type="gene ID" value="AGAP005947"/>
</dbReference>
<dbReference type="GeneID" id="1276616"/>
<dbReference type="KEGG" id="aga:1276616"/>
<dbReference type="CTD" id="6207"/>
<dbReference type="VEuPathDB" id="VectorBase:AGAMI1_014036"/>
<dbReference type="VEuPathDB" id="VectorBase:AGAP005947"/>
<dbReference type="eggNOG" id="KOG0400">
    <property type="taxonomic scope" value="Eukaryota"/>
</dbReference>
<dbReference type="HOGENOM" id="CLU_090139_1_0_1"/>
<dbReference type="InParanoid" id="P52811"/>
<dbReference type="OMA" id="MHTRRKG"/>
<dbReference type="OrthoDB" id="623277at2759"/>
<dbReference type="PhylomeDB" id="P52811"/>
<dbReference type="Proteomes" id="UP000007062">
    <property type="component" value="Chromosome 2L"/>
</dbReference>
<dbReference type="GO" id="GO:0022627">
    <property type="term" value="C:cytosolic small ribosomal subunit"/>
    <property type="evidence" value="ECO:0000318"/>
    <property type="project" value="GO_Central"/>
</dbReference>
<dbReference type="GO" id="GO:0005730">
    <property type="term" value="C:nucleolus"/>
    <property type="evidence" value="ECO:0000318"/>
    <property type="project" value="GO_Central"/>
</dbReference>
<dbReference type="GO" id="GO:0070181">
    <property type="term" value="F:small ribosomal subunit rRNA binding"/>
    <property type="evidence" value="ECO:0000318"/>
    <property type="project" value="GO_Central"/>
</dbReference>
<dbReference type="GO" id="GO:0003735">
    <property type="term" value="F:structural constituent of ribosome"/>
    <property type="evidence" value="ECO:0000318"/>
    <property type="project" value="GO_Central"/>
</dbReference>
<dbReference type="GO" id="GO:0006412">
    <property type="term" value="P:translation"/>
    <property type="evidence" value="ECO:0007669"/>
    <property type="project" value="InterPro"/>
</dbReference>
<dbReference type="CDD" id="cd00353">
    <property type="entry name" value="Ribosomal_S15p_S13e"/>
    <property type="match status" value="1"/>
</dbReference>
<dbReference type="FunFam" id="1.10.287.10:FF:000003">
    <property type="entry name" value="40S ribosomal protein S13"/>
    <property type="match status" value="1"/>
</dbReference>
<dbReference type="FunFam" id="4.10.860.130:FF:000001">
    <property type="entry name" value="40S ribosomal protein S13"/>
    <property type="match status" value="1"/>
</dbReference>
<dbReference type="Gene3D" id="4.10.860.130">
    <property type="match status" value="1"/>
</dbReference>
<dbReference type="Gene3D" id="1.10.287.10">
    <property type="entry name" value="S15/NS1, RNA-binding"/>
    <property type="match status" value="1"/>
</dbReference>
<dbReference type="HAMAP" id="MF_01343_A">
    <property type="entry name" value="Ribosomal_uS15_A"/>
    <property type="match status" value="1"/>
</dbReference>
<dbReference type="InterPro" id="IPR000589">
    <property type="entry name" value="Ribosomal_uS15"/>
</dbReference>
<dbReference type="InterPro" id="IPR023029">
    <property type="entry name" value="Ribosomal_uS15_arc_euk"/>
</dbReference>
<dbReference type="InterPro" id="IPR012606">
    <property type="entry name" value="Ribosomal_uS15_N"/>
</dbReference>
<dbReference type="InterPro" id="IPR009068">
    <property type="entry name" value="uS15_NS1_RNA-bd_sf"/>
</dbReference>
<dbReference type="NCBIfam" id="NF006331">
    <property type="entry name" value="PRK08561.1"/>
    <property type="match status" value="1"/>
</dbReference>
<dbReference type="PANTHER" id="PTHR11885">
    <property type="entry name" value="RIBOSOMAL PROTEIN S15P/S13E"/>
    <property type="match status" value="1"/>
</dbReference>
<dbReference type="PANTHER" id="PTHR11885:SF6">
    <property type="entry name" value="SMALL RIBOSOMAL SUBUNIT PROTEIN US15"/>
    <property type="match status" value="1"/>
</dbReference>
<dbReference type="Pfam" id="PF08069">
    <property type="entry name" value="Ribosomal_S13_N"/>
    <property type="match status" value="1"/>
</dbReference>
<dbReference type="Pfam" id="PF00312">
    <property type="entry name" value="Ribosomal_S15"/>
    <property type="match status" value="1"/>
</dbReference>
<dbReference type="SMART" id="SM01386">
    <property type="entry name" value="Ribosomal_S13_N"/>
    <property type="match status" value="1"/>
</dbReference>
<dbReference type="SMART" id="SM01387">
    <property type="entry name" value="Ribosomal_S15"/>
    <property type="match status" value="1"/>
</dbReference>
<dbReference type="SUPFAM" id="SSF47060">
    <property type="entry name" value="S15/NS1 RNA-binding domain"/>
    <property type="match status" value="1"/>
</dbReference>
<dbReference type="PROSITE" id="PS00362">
    <property type="entry name" value="RIBOSOMAL_S15"/>
    <property type="match status" value="1"/>
</dbReference>
<evidence type="ECO:0000250" key="1"/>
<evidence type="ECO:0000305" key="2"/>
<feature type="initiator methionine" description="Removed" evidence="1">
    <location>
        <position position="1"/>
    </location>
</feature>
<feature type="chain" id="PRO_0000115674" description="Small ribosomal subunit protein uS15">
    <location>
        <begin position="2"/>
        <end position="151"/>
    </location>
</feature>